<keyword id="KW-0456">Lyase</keyword>
<gene>
    <name evidence="2" type="primary">nirDL</name>
</gene>
<reference key="1">
    <citation type="journal article" date="2011" name="Proc. Natl. Acad. Sci. U.S.A.">
        <title>Molecular hijacking of siroheme for the synthesis of heme and d1 heme.</title>
        <authorList>
            <person name="Bali S."/>
            <person name="Lawrence A.D."/>
            <person name="Lobo S.A."/>
            <person name="Saraiva L.M."/>
            <person name="Golding B.T."/>
            <person name="Palmer D.J."/>
            <person name="Howard M.J."/>
            <person name="Ferguson S.J."/>
            <person name="Warren M.J."/>
        </authorList>
    </citation>
    <scope>NUCLEOTIDE SEQUENCE [GENOMIC DNA]</scope>
    <scope>FUNCTION</scope>
    <scope>CATALYTIC ACTIVITY</scope>
    <scope>PATHWAY</scope>
    <scope>SUBUNIT</scope>
    <source>
        <strain>ATCC 35512 / DSM 2944 / CIP 106514 / LMD 82.5 / NBRC 102493 / NCCB 82005 / GB17</strain>
    </source>
</reference>
<protein>
    <recommendedName>
        <fullName evidence="3">Siroheme decarboxylase NirDL subunit</fullName>
        <ecNumber evidence="1">4.1.1.111</ecNumber>
    </recommendedName>
</protein>
<name>NIRDL_PARPN</name>
<accession>I6UH61</accession>
<sequence length="326" mass="35611">MTMDDLDLRLLDGFQRDLPLETRPFAAIANRLNTSEAEVIARLARLRDEGLIARIGATCRPNTAGASTLAALRVPVRRIDKVAALVGAEPGVNHSYLREGSDWNLWFVATAPDAEALEESLVRIETATGLVPLSLPLVRAFNIDLGFPLIGPRRAMALDRPTDLDVLRPRDKALMQALTTGLALVPRPFVALGQALGRSEAEVISRIRALAAARILTRVGVIVRHRALGWCENAMVVWRLPEPAVEAAGTALAAVPGVTLCYQRRTVPGLWNWPLFCMIHARSRAEAMEVLVQARALPELQGVPHRILFSTRCFRQRGAVIAEVAA</sequence>
<proteinExistence type="evidence at protein level"/>
<dbReference type="EC" id="4.1.1.111" evidence="1"/>
<dbReference type="EMBL" id="JQ922108">
    <property type="protein sequence ID" value="AFM94357.1"/>
    <property type="molecule type" value="Genomic_DNA"/>
</dbReference>
<dbReference type="SMR" id="I6UH61"/>
<dbReference type="BioCyc" id="MetaCyc:MONOMER-18861"/>
<dbReference type="GO" id="GO:0016829">
    <property type="term" value="F:lyase activity"/>
    <property type="evidence" value="ECO:0007669"/>
    <property type="project" value="UniProtKB-KW"/>
</dbReference>
<dbReference type="Gene3D" id="3.30.70.3460">
    <property type="match status" value="2"/>
</dbReference>
<dbReference type="Gene3D" id="1.10.10.10">
    <property type="entry name" value="Winged helix-like DNA-binding domain superfamily/Winged helix DNA-binding domain"/>
    <property type="match status" value="1"/>
</dbReference>
<dbReference type="InterPro" id="IPR040523">
    <property type="entry name" value="AsnC_trans_reg2"/>
</dbReference>
<dbReference type="InterPro" id="IPR050684">
    <property type="entry name" value="HTH-Siroheme_Decarb"/>
</dbReference>
<dbReference type="InterPro" id="IPR053953">
    <property type="entry name" value="NirdL-like_HTH"/>
</dbReference>
<dbReference type="InterPro" id="IPR019888">
    <property type="entry name" value="Tscrpt_reg_AsnC-like"/>
</dbReference>
<dbReference type="InterPro" id="IPR019885">
    <property type="entry name" value="Tscrpt_reg_HTH_AsnC-type_CS"/>
</dbReference>
<dbReference type="InterPro" id="IPR036388">
    <property type="entry name" value="WH-like_DNA-bd_sf"/>
</dbReference>
<dbReference type="InterPro" id="IPR036390">
    <property type="entry name" value="WH_DNA-bd_sf"/>
</dbReference>
<dbReference type="PANTHER" id="PTHR43413:SF1">
    <property type="entry name" value="SIROHEME DECARBOXYLASE NIRL SUBUNIT"/>
    <property type="match status" value="1"/>
</dbReference>
<dbReference type="PANTHER" id="PTHR43413">
    <property type="entry name" value="TRANSCRIPTIONAL REGULATOR, ASNC FAMILY"/>
    <property type="match status" value="1"/>
</dbReference>
<dbReference type="Pfam" id="PF17805">
    <property type="entry name" value="AsnC_trans_reg2"/>
    <property type="match status" value="2"/>
</dbReference>
<dbReference type="Pfam" id="PF22451">
    <property type="entry name" value="NirdL-like_HTH"/>
    <property type="match status" value="2"/>
</dbReference>
<dbReference type="SMART" id="SM00344">
    <property type="entry name" value="HTH_ASNC"/>
    <property type="match status" value="1"/>
</dbReference>
<dbReference type="SUPFAM" id="SSF46785">
    <property type="entry name" value="Winged helix' DNA-binding domain"/>
    <property type="match status" value="1"/>
</dbReference>
<evidence type="ECO:0000269" key="1">
    <source>
    </source>
</evidence>
<evidence type="ECO:0000303" key="2">
    <source>
    </source>
</evidence>
<evidence type="ECO:0000305" key="3"/>
<comment type="function">
    <text evidence="1">Involved in heme d1 biosynthesis. Catalyzes the decarboxylation of siroheme into didecarboxysiroheme (PubMed:21969545). Siroheme is probably decarboxylated to monodecarboxysiroheme, which is in turn decarboxylated to didecarboxysiroheme (PubMed:21969545).</text>
</comment>
<comment type="catalytic activity">
    <reaction evidence="1">
        <text>siroheme + 2 H(+) = 12,18-didecarboxysiroheme + 2 CO2</text>
        <dbReference type="Rhea" id="RHEA:19093"/>
        <dbReference type="ChEBI" id="CHEBI:15378"/>
        <dbReference type="ChEBI" id="CHEBI:16526"/>
        <dbReference type="ChEBI" id="CHEBI:60052"/>
        <dbReference type="ChEBI" id="CHEBI:140497"/>
        <dbReference type="EC" id="4.1.1.111"/>
    </reaction>
</comment>
<comment type="pathway">
    <text evidence="1">Porphyrin-containing compound metabolism.</text>
</comment>
<comment type="subunit">
    <text evidence="1">Forms a complex composed of NirDL, NirG and NirH. All proteins are required for the total conversion of siroheme to didecarboxysiroheme.</text>
</comment>
<comment type="similarity">
    <text evidence="3">Belongs to the Ahb/Nir family.</text>
</comment>
<organism>
    <name type="scientific">Paracoccus pantotrophus</name>
    <name type="common">Thiosphaera pantotropha</name>
    <dbReference type="NCBI Taxonomy" id="82367"/>
    <lineage>
        <taxon>Bacteria</taxon>
        <taxon>Pseudomonadati</taxon>
        <taxon>Pseudomonadota</taxon>
        <taxon>Alphaproteobacteria</taxon>
        <taxon>Rhodobacterales</taxon>
        <taxon>Paracoccaceae</taxon>
        <taxon>Paracoccus</taxon>
    </lineage>
</organism>
<feature type="chain" id="PRO_0000450515" description="Siroheme decarboxylase NirDL subunit">
    <location>
        <begin position="1"/>
        <end position="326"/>
    </location>
</feature>